<organism>
    <name type="scientific">Bacillus subtilis (strain 168)</name>
    <dbReference type="NCBI Taxonomy" id="224308"/>
    <lineage>
        <taxon>Bacteria</taxon>
        <taxon>Bacillati</taxon>
        <taxon>Bacillota</taxon>
        <taxon>Bacilli</taxon>
        <taxon>Bacillales</taxon>
        <taxon>Bacillaceae</taxon>
        <taxon>Bacillus</taxon>
    </lineage>
</organism>
<protein>
    <recommendedName>
        <fullName>Uncharacterized protein YhjR</fullName>
    </recommendedName>
</protein>
<proteinExistence type="predicted"/>
<accession>O07572</accession>
<accession>Q796R4</accession>
<sequence>MHYSYYPYPVPYREDPVLIRNLQKAINGEFSAIQCYRKLAELAHSDEVRKQIEEIRRDEIRHLREFSTLYGSITGKHIMPKQTEECPDNFTRGLDAAFKDEQETVDFYLRAAEETSNLKAKGVFTRAARDEQNHAVWFLYYLMER</sequence>
<keyword id="KW-1185">Reference proteome</keyword>
<dbReference type="EMBL" id="Y14081">
    <property type="protein sequence ID" value="CAA74480.1"/>
    <property type="molecule type" value="Genomic_DNA"/>
</dbReference>
<dbReference type="EMBL" id="AL009126">
    <property type="protein sequence ID" value="CAB12901.1"/>
    <property type="molecule type" value="Genomic_DNA"/>
</dbReference>
<dbReference type="PIR" id="A69835">
    <property type="entry name" value="A69835"/>
</dbReference>
<dbReference type="RefSeq" id="NP_388942.1">
    <property type="nucleotide sequence ID" value="NC_000964.3"/>
</dbReference>
<dbReference type="RefSeq" id="WP_003245806.1">
    <property type="nucleotide sequence ID" value="NZ_OZ025638.1"/>
</dbReference>
<dbReference type="SMR" id="O07572"/>
<dbReference type="FunCoup" id="O07572">
    <property type="interactions" value="55"/>
</dbReference>
<dbReference type="STRING" id="224308.BSU10610"/>
<dbReference type="PaxDb" id="224308-BSU10610"/>
<dbReference type="DNASU" id="939352"/>
<dbReference type="EnsemblBacteria" id="CAB12901">
    <property type="protein sequence ID" value="CAB12901"/>
    <property type="gene ID" value="BSU_10610"/>
</dbReference>
<dbReference type="GeneID" id="939352"/>
<dbReference type="KEGG" id="bsu:BSU10610"/>
<dbReference type="PATRIC" id="fig|224308.179.peg.1141"/>
<dbReference type="eggNOG" id="COG1633">
    <property type="taxonomic scope" value="Bacteria"/>
</dbReference>
<dbReference type="InParanoid" id="O07572"/>
<dbReference type="OrthoDB" id="573482at2"/>
<dbReference type="BioCyc" id="BSUB:BSU10610-MONOMER"/>
<dbReference type="Proteomes" id="UP000001570">
    <property type="component" value="Chromosome"/>
</dbReference>
<dbReference type="GO" id="GO:0046872">
    <property type="term" value="F:metal ion binding"/>
    <property type="evidence" value="ECO:0007669"/>
    <property type="project" value="InterPro"/>
</dbReference>
<dbReference type="GO" id="GO:0016491">
    <property type="term" value="F:oxidoreductase activity"/>
    <property type="evidence" value="ECO:0007669"/>
    <property type="project" value="InterPro"/>
</dbReference>
<dbReference type="CDD" id="cd00657">
    <property type="entry name" value="Ferritin_like"/>
    <property type="match status" value="1"/>
</dbReference>
<dbReference type="Gene3D" id="1.20.120.660">
    <property type="entry name" value="IL-4 antagonist (De novo design) like domain"/>
    <property type="match status" value="2"/>
</dbReference>
<dbReference type="InterPro" id="IPR009078">
    <property type="entry name" value="Ferritin-like_SF"/>
</dbReference>
<dbReference type="InterPro" id="IPR003251">
    <property type="entry name" value="Rr_diiron-bd_dom"/>
</dbReference>
<dbReference type="Pfam" id="PF02915">
    <property type="entry name" value="Rubrerythrin"/>
    <property type="match status" value="1"/>
</dbReference>
<dbReference type="SUPFAM" id="SSF47240">
    <property type="entry name" value="Ferritin-like"/>
    <property type="match status" value="1"/>
</dbReference>
<reference key="1">
    <citation type="journal article" date="1998" name="Microbiology">
        <title>The 172 kb prkA-addAB region from 83 degrees to 97 degrees of the Bacillus subtilis chromosome contains several dysfunctional genes, the glyB marker, many genes encoding transporter proteins, and the ubiquitous hit gene.</title>
        <authorList>
            <person name="Noback M.A."/>
            <person name="Holsappel S."/>
            <person name="Kiewiet R."/>
            <person name="Terpstra P."/>
            <person name="Wambutt R."/>
            <person name="Wedler H."/>
            <person name="Venema G."/>
            <person name="Bron S."/>
        </authorList>
    </citation>
    <scope>NUCLEOTIDE SEQUENCE [GENOMIC DNA]</scope>
    <source>
        <strain>168</strain>
    </source>
</reference>
<reference key="2">
    <citation type="journal article" date="1997" name="Nature">
        <title>The complete genome sequence of the Gram-positive bacterium Bacillus subtilis.</title>
        <authorList>
            <person name="Kunst F."/>
            <person name="Ogasawara N."/>
            <person name="Moszer I."/>
            <person name="Albertini A.M."/>
            <person name="Alloni G."/>
            <person name="Azevedo V."/>
            <person name="Bertero M.G."/>
            <person name="Bessieres P."/>
            <person name="Bolotin A."/>
            <person name="Borchert S."/>
            <person name="Borriss R."/>
            <person name="Boursier L."/>
            <person name="Brans A."/>
            <person name="Braun M."/>
            <person name="Brignell S.C."/>
            <person name="Bron S."/>
            <person name="Brouillet S."/>
            <person name="Bruschi C.V."/>
            <person name="Caldwell B."/>
            <person name="Capuano V."/>
            <person name="Carter N.M."/>
            <person name="Choi S.-K."/>
            <person name="Codani J.-J."/>
            <person name="Connerton I.F."/>
            <person name="Cummings N.J."/>
            <person name="Daniel R.A."/>
            <person name="Denizot F."/>
            <person name="Devine K.M."/>
            <person name="Duesterhoeft A."/>
            <person name="Ehrlich S.D."/>
            <person name="Emmerson P.T."/>
            <person name="Entian K.-D."/>
            <person name="Errington J."/>
            <person name="Fabret C."/>
            <person name="Ferrari E."/>
            <person name="Foulger D."/>
            <person name="Fritz C."/>
            <person name="Fujita M."/>
            <person name="Fujita Y."/>
            <person name="Fuma S."/>
            <person name="Galizzi A."/>
            <person name="Galleron N."/>
            <person name="Ghim S.-Y."/>
            <person name="Glaser P."/>
            <person name="Goffeau A."/>
            <person name="Golightly E.J."/>
            <person name="Grandi G."/>
            <person name="Guiseppi G."/>
            <person name="Guy B.J."/>
            <person name="Haga K."/>
            <person name="Haiech J."/>
            <person name="Harwood C.R."/>
            <person name="Henaut A."/>
            <person name="Hilbert H."/>
            <person name="Holsappel S."/>
            <person name="Hosono S."/>
            <person name="Hullo M.-F."/>
            <person name="Itaya M."/>
            <person name="Jones L.-M."/>
            <person name="Joris B."/>
            <person name="Karamata D."/>
            <person name="Kasahara Y."/>
            <person name="Klaerr-Blanchard M."/>
            <person name="Klein C."/>
            <person name="Kobayashi Y."/>
            <person name="Koetter P."/>
            <person name="Koningstein G."/>
            <person name="Krogh S."/>
            <person name="Kumano M."/>
            <person name="Kurita K."/>
            <person name="Lapidus A."/>
            <person name="Lardinois S."/>
            <person name="Lauber J."/>
            <person name="Lazarevic V."/>
            <person name="Lee S.-M."/>
            <person name="Levine A."/>
            <person name="Liu H."/>
            <person name="Masuda S."/>
            <person name="Mauel C."/>
            <person name="Medigue C."/>
            <person name="Medina N."/>
            <person name="Mellado R.P."/>
            <person name="Mizuno M."/>
            <person name="Moestl D."/>
            <person name="Nakai S."/>
            <person name="Noback M."/>
            <person name="Noone D."/>
            <person name="O'Reilly M."/>
            <person name="Ogawa K."/>
            <person name="Ogiwara A."/>
            <person name="Oudega B."/>
            <person name="Park S.-H."/>
            <person name="Parro V."/>
            <person name="Pohl T.M."/>
            <person name="Portetelle D."/>
            <person name="Porwollik S."/>
            <person name="Prescott A.M."/>
            <person name="Presecan E."/>
            <person name="Pujic P."/>
            <person name="Purnelle B."/>
            <person name="Rapoport G."/>
            <person name="Rey M."/>
            <person name="Reynolds S."/>
            <person name="Rieger M."/>
            <person name="Rivolta C."/>
            <person name="Rocha E."/>
            <person name="Roche B."/>
            <person name="Rose M."/>
            <person name="Sadaie Y."/>
            <person name="Sato T."/>
            <person name="Scanlan E."/>
            <person name="Schleich S."/>
            <person name="Schroeter R."/>
            <person name="Scoffone F."/>
            <person name="Sekiguchi J."/>
            <person name="Sekowska A."/>
            <person name="Seror S.J."/>
            <person name="Serror P."/>
            <person name="Shin B.-S."/>
            <person name="Soldo B."/>
            <person name="Sorokin A."/>
            <person name="Tacconi E."/>
            <person name="Takagi T."/>
            <person name="Takahashi H."/>
            <person name="Takemaru K."/>
            <person name="Takeuchi M."/>
            <person name="Tamakoshi A."/>
            <person name="Tanaka T."/>
            <person name="Terpstra P."/>
            <person name="Tognoni A."/>
            <person name="Tosato V."/>
            <person name="Uchiyama S."/>
            <person name="Vandenbol M."/>
            <person name="Vannier F."/>
            <person name="Vassarotti A."/>
            <person name="Viari A."/>
            <person name="Wambutt R."/>
            <person name="Wedler E."/>
            <person name="Wedler H."/>
            <person name="Weitzenegger T."/>
            <person name="Winters P."/>
            <person name="Wipat A."/>
            <person name="Yamamoto H."/>
            <person name="Yamane K."/>
            <person name="Yasumoto K."/>
            <person name="Yata K."/>
            <person name="Yoshida K."/>
            <person name="Yoshikawa H.-F."/>
            <person name="Zumstein E."/>
            <person name="Yoshikawa H."/>
            <person name="Danchin A."/>
        </authorList>
    </citation>
    <scope>NUCLEOTIDE SEQUENCE [LARGE SCALE GENOMIC DNA]</scope>
    <source>
        <strain>168</strain>
    </source>
</reference>
<feature type="chain" id="PRO_0000388340" description="Uncharacterized protein YhjR">
    <location>
        <begin position="1"/>
        <end position="145"/>
    </location>
</feature>
<name>YHJR_BACSU</name>
<gene>
    <name type="primary">yhjR</name>
    <name type="ordered locus">BSU10610</name>
</gene>